<sequence length="500" mass="55443">MDAALALLFGQVATAVLPYVVNSIGRVPRPKRVDVKKAMGEAHQCRPVVPYRAPRPYTEGRVKALFIGINYTGSSAQLGGCVNDVMHMLQTLQRIEFPISECCILVDDRRFPNFTAMPTRENIIKYMAWLVYDVRPGDVLFFHFSGHGAETKGGRDSNEKMDQCLVPLDYDKAGAILDDDLFELMIKGLPAGVRMTAVFDCCHSASLLDLPFAFVAGRNVSSNQRHEMRMVRKDNYSRGDVVMFSGCEDSGTSADVTNTSSFGNGTVAAGGAATQAFTWALLNTTGYSYIDIFMKTREVLRQKGYKQVPQLSSSKPVDLYKQFSLFGPLTMNASLVQHLPQEYVQPWAPHPAYQQPHEATLPASVSQPHSQPVMGIPVASTSNGKSNPGVSDGGRASGEVYPPTQYPSSHPAPQQQAYYQPPQQAYYQPPQQAYYQPPQQAYYQPPQQAYYQPPQQAYYQPEPHHQPAPPPPPKKENKPARPGYPMSYCMKFSQGKPGRK</sequence>
<keyword id="KW-0106">Calcium</keyword>
<keyword id="KW-0967">Endosome</keyword>
<keyword id="KW-0325">Glycoprotein</keyword>
<keyword id="KW-0378">Hydrolase</keyword>
<keyword id="KW-0479">Metal-binding</keyword>
<keyword id="KW-0645">Protease</keyword>
<keyword id="KW-0732">Signal</keyword>
<keyword id="KW-0788">Thiol protease</keyword>
<dbReference type="EC" id="3.4.22.-" evidence="1"/>
<dbReference type="EMBL" id="AJ514941">
    <property type="protein sequence ID" value="CAD55946.1"/>
    <property type="molecule type" value="Genomic_DNA"/>
</dbReference>
<dbReference type="EMBL" id="AJ437305">
    <property type="protein sequence ID" value="CAD24806.1"/>
    <property type="molecule type" value="mRNA"/>
</dbReference>
<dbReference type="SMR" id="Q8IEW1"/>
<dbReference type="MEROPS" id="C14.043"/>
<dbReference type="GlyCosmos" id="Q8IEW1">
    <property type="glycosylation" value="8 sites, No reported glycans"/>
</dbReference>
<dbReference type="EnsemblProtists" id="EAN77286">
    <property type="protein sequence ID" value="EAN77286"/>
    <property type="gene ID" value="Tb09.211.4760"/>
</dbReference>
<dbReference type="HOGENOM" id="CLU_545783_0_0_1"/>
<dbReference type="OMA" id="EKYDQCL"/>
<dbReference type="GO" id="GO:0055037">
    <property type="term" value="C:recycling endosome"/>
    <property type="evidence" value="ECO:0000314"/>
    <property type="project" value="UniProtKB"/>
</dbReference>
<dbReference type="GO" id="GO:0004197">
    <property type="term" value="F:cysteine-type endopeptidase activity"/>
    <property type="evidence" value="ECO:0007669"/>
    <property type="project" value="InterPro"/>
</dbReference>
<dbReference type="GO" id="GO:0046872">
    <property type="term" value="F:metal ion binding"/>
    <property type="evidence" value="ECO:0007669"/>
    <property type="project" value="UniProtKB-KW"/>
</dbReference>
<dbReference type="GO" id="GO:0006508">
    <property type="term" value="P:proteolysis"/>
    <property type="evidence" value="ECO:0007669"/>
    <property type="project" value="UniProtKB-KW"/>
</dbReference>
<dbReference type="FunFam" id="3.40.50.12660:FF:000003">
    <property type="entry name" value="Metacaspase MCA2"/>
    <property type="match status" value="1"/>
</dbReference>
<dbReference type="Gene3D" id="3.40.50.12660">
    <property type="match status" value="1"/>
</dbReference>
<dbReference type="InterPro" id="IPR029030">
    <property type="entry name" value="Caspase-like_dom_sf"/>
</dbReference>
<dbReference type="InterPro" id="IPR050452">
    <property type="entry name" value="Metacaspase"/>
</dbReference>
<dbReference type="InterPro" id="IPR011600">
    <property type="entry name" value="Pept_C14_caspase"/>
</dbReference>
<dbReference type="PANTHER" id="PTHR48104:SF30">
    <property type="entry name" value="METACASPASE-1"/>
    <property type="match status" value="1"/>
</dbReference>
<dbReference type="PANTHER" id="PTHR48104">
    <property type="entry name" value="METACASPASE-4"/>
    <property type="match status" value="1"/>
</dbReference>
<dbReference type="Pfam" id="PF00656">
    <property type="entry name" value="Peptidase_C14"/>
    <property type="match status" value="1"/>
</dbReference>
<dbReference type="SUPFAM" id="SSF52129">
    <property type="entry name" value="Caspase-like"/>
    <property type="match status" value="1"/>
</dbReference>
<protein>
    <recommendedName>
        <fullName evidence="8">Metacaspase-5</fullName>
        <ecNumber evidence="1">3.4.22.-</ecNumber>
    </recommendedName>
    <alternativeName>
        <fullName evidence="7">TbMCA5</fullName>
    </alternativeName>
</protein>
<evidence type="ECO:0000250" key="1">
    <source>
        <dbReference type="UniProtKB" id="Q2VLK8"/>
    </source>
</evidence>
<evidence type="ECO:0000250" key="2">
    <source>
        <dbReference type="UniProtKB" id="Q585F3"/>
    </source>
</evidence>
<evidence type="ECO:0000255" key="3"/>
<evidence type="ECO:0000255" key="4">
    <source>
        <dbReference type="PROSITE-ProRule" id="PRU00498"/>
    </source>
</evidence>
<evidence type="ECO:0000256" key="5">
    <source>
        <dbReference type="SAM" id="MobiDB-lite"/>
    </source>
</evidence>
<evidence type="ECO:0000269" key="6">
    <source>
    </source>
</evidence>
<evidence type="ECO:0000303" key="7">
    <source>
    </source>
</evidence>
<evidence type="ECO:0000305" key="8"/>
<evidence type="ECO:0000312" key="9">
    <source>
        <dbReference type="EMBL" id="CAD24806.1"/>
    </source>
</evidence>
<evidence type="ECO:0000312" key="10">
    <source>
        <dbReference type="EMBL" id="CAD55946.1"/>
    </source>
</evidence>
<name>MCA5_TRYBB</name>
<gene>
    <name evidence="7" type="primary">MCA5</name>
</gene>
<accession>Q8IEW1</accession>
<accession>Q8T8E4</accession>
<reference evidence="10" key="1">
    <citation type="submission" date="2002-10" db="EMBL/GenBank/DDBJ databases">
        <title>Clan CD cysteine peptidases of parasitic protoza.</title>
        <authorList>
            <person name="Mottram J.C."/>
            <person name="Helms M.J."/>
            <person name="Coombs G.H."/>
            <person name="Sajid M."/>
        </authorList>
    </citation>
    <scope>NUCLEOTIDE SEQUENCE [GENOMIC DNA]</scope>
    <source>
        <strain evidence="10">EATRO 795</strain>
    </source>
</reference>
<reference evidence="9" key="2">
    <citation type="journal article" date="2002" name="FEBS Lett.">
        <title>A metacaspase of Trypanosoma brucei causes loss of respiration competence and clonal death in the yeast Saccharomyces cerevisiae.</title>
        <authorList>
            <person name="Szallies A."/>
            <person name="Kubata B.K."/>
            <person name="Duszenko M."/>
        </authorList>
    </citation>
    <scope>NUCLEOTIDE SEQUENCE [MRNA] OF 1-340</scope>
</reference>
<reference evidence="8" key="3">
    <citation type="journal article" date="2006" name="J. Cell Sci.">
        <title>Bloodstream form Trypanosoma brucei depend upon multiple metacaspases associated with RAB11-positive endosomes.</title>
        <authorList>
            <person name="Helms M.J."/>
            <person name="Ambit A."/>
            <person name="Appleton P."/>
            <person name="Tetley L."/>
            <person name="Coombs G.H."/>
            <person name="Mottram J.C."/>
        </authorList>
    </citation>
    <scope>SUBCELLULAR LOCATION</scope>
    <scope>DEVELOPMENTAL STAGE</scope>
    <scope>DISRUPTION PHENOTYPE</scope>
    <source>
        <strain evidence="6">EATRO 795</strain>
    </source>
</reference>
<comment type="function">
    <text evidence="1">Cysteine protease that cleaves specifically after arginine or lysine residues.</text>
</comment>
<comment type="subcellular location">
    <subcellularLocation>
        <location evidence="6">Recycling endosome</location>
    </subcellularLocation>
    <text evidence="6">Localizes to RAB11-positive recycling endosomes.</text>
</comment>
<comment type="developmental stage">
    <text evidence="6">Expressed in the mammalian blood stage form and insect procyclic form (at protein level).</text>
</comment>
<comment type="disruption phenotype">
    <text evidence="6">RNAi-mediated knockdown causes no defect in the growth of the bloodstream stage form (PubMed:16507595). Knockout has no defect in the growth of the procyclic form (PubMed:16507595). Simultaneous RNAi-mediated knockdown of MCA2, MCA3 and MCA5 in the bloodstream stage form causes a growth arrest resulting from a block prior to cytokinesis; DNA replication and mitosis are normal (PubMed:16507595). Has no effect on VSG protein recycling (PubMed:16507595). Triple knockout of MCA2, MCA3 and MCA5 in the bloodstream form causes an initial slower growth rate in vitro which reaches wild-type levels after several weeks of culture (PubMed:16507595). Triple knockouts have a normal growth rate and virulence in infected mice (PubMed:16507595).</text>
</comment>
<comment type="similarity">
    <text evidence="8">Belongs to the peptidase C14B family.</text>
</comment>
<feature type="signal peptide" evidence="3">
    <location>
        <begin position="1"/>
        <end position="18"/>
    </location>
</feature>
<feature type="chain" id="PRO_5004308349" description="Metacaspase-5" evidence="3">
    <location>
        <begin position="19"/>
        <end position="500"/>
    </location>
</feature>
<feature type="region of interest" description="Important for catalytic activity" evidence="1">
    <location>
        <begin position="19"/>
        <end position="63"/>
    </location>
</feature>
<feature type="region of interest" description="Disordered" evidence="5">
    <location>
        <begin position="358"/>
        <end position="419"/>
    </location>
</feature>
<feature type="region of interest" description="Disordered" evidence="5">
    <location>
        <begin position="444"/>
        <end position="500"/>
    </location>
</feature>
<feature type="compositionally biased region" description="Polar residues" evidence="5">
    <location>
        <begin position="379"/>
        <end position="389"/>
    </location>
</feature>
<feature type="compositionally biased region" description="Low complexity" evidence="5">
    <location>
        <begin position="444"/>
        <end position="461"/>
    </location>
</feature>
<feature type="active site" evidence="1">
    <location>
        <position position="147"/>
    </location>
</feature>
<feature type="active site" evidence="1">
    <location>
        <position position="202"/>
    </location>
</feature>
<feature type="binding site" evidence="2">
    <location>
        <position position="162"/>
    </location>
    <ligand>
        <name>Ca(2+)</name>
        <dbReference type="ChEBI" id="CHEBI:29108"/>
    </ligand>
</feature>
<feature type="binding site" evidence="2">
    <location>
        <position position="178"/>
    </location>
    <ligand>
        <name>Ca(2+)</name>
        <dbReference type="ChEBI" id="CHEBI:29108"/>
    </ligand>
</feature>
<feature type="binding site" evidence="2">
    <location>
        <position position="179"/>
    </location>
    <ligand>
        <name>Ca(2+)</name>
        <dbReference type="ChEBI" id="CHEBI:29108"/>
    </ligand>
</feature>
<feature type="binding site" evidence="2">
    <location>
        <position position="209"/>
    </location>
    <ligand>
        <name>Ca(2+)</name>
        <dbReference type="ChEBI" id="CHEBI:29108"/>
    </ligand>
</feature>
<feature type="glycosylation site" description="N-linked (GlcNAc...) asparagine" evidence="4">
    <location>
        <position position="70"/>
    </location>
</feature>
<feature type="glycosylation site" description="N-linked (GlcNAc...) asparagine" evidence="4">
    <location>
        <position position="113"/>
    </location>
</feature>
<feature type="glycosylation site" description="N-linked (GlcNAc...) asparagine" evidence="4">
    <location>
        <position position="219"/>
    </location>
</feature>
<feature type="glycosylation site" description="N-linked (GlcNAc...) asparagine" evidence="4">
    <location>
        <position position="235"/>
    </location>
</feature>
<feature type="glycosylation site" description="N-linked (GlcNAc...) asparagine" evidence="4">
    <location>
        <position position="258"/>
    </location>
</feature>
<feature type="glycosylation site" description="N-linked (GlcNAc...) asparagine" evidence="4">
    <location>
        <position position="264"/>
    </location>
</feature>
<feature type="glycosylation site" description="N-linked (GlcNAc...) asparagine" evidence="4">
    <location>
        <position position="283"/>
    </location>
</feature>
<feature type="glycosylation site" description="N-linked (GlcNAc...) asparagine" evidence="4">
    <location>
        <position position="332"/>
    </location>
</feature>
<feature type="sequence conflict" description="In Ref. 2; CAD24806." evidence="8" ref="2">
    <original>Q</original>
    <variation>K</variation>
    <location>
        <position position="90"/>
    </location>
</feature>
<feature type="sequence conflict" description="In Ref. 2; CAD24806." evidence="8" ref="2">
    <original>H</original>
    <variation>D</variation>
    <location>
        <position position="338"/>
    </location>
</feature>
<proteinExistence type="evidence at protein level"/>
<organism>
    <name type="scientific">Trypanosoma brucei brucei</name>
    <dbReference type="NCBI Taxonomy" id="5702"/>
    <lineage>
        <taxon>Eukaryota</taxon>
        <taxon>Discoba</taxon>
        <taxon>Euglenozoa</taxon>
        <taxon>Kinetoplastea</taxon>
        <taxon>Metakinetoplastina</taxon>
        <taxon>Trypanosomatida</taxon>
        <taxon>Trypanosomatidae</taxon>
        <taxon>Trypanosoma</taxon>
    </lineage>
</organism>